<comment type="function">
    <text>Sucrose-cleaving enzyme that provides UDP-glucose and fructose for various metabolic pathways.</text>
</comment>
<comment type="catalytic activity">
    <reaction>
        <text>an NDP-alpha-D-glucose + D-fructose = a ribonucleoside 5'-diphosphate + sucrose + H(+)</text>
        <dbReference type="Rhea" id="RHEA:16241"/>
        <dbReference type="ChEBI" id="CHEBI:15378"/>
        <dbReference type="ChEBI" id="CHEBI:17992"/>
        <dbReference type="ChEBI" id="CHEBI:37721"/>
        <dbReference type="ChEBI" id="CHEBI:57930"/>
        <dbReference type="ChEBI" id="CHEBI:76533"/>
        <dbReference type="EC" id="2.4.1.13"/>
    </reaction>
</comment>
<comment type="similarity">
    <text evidence="2">Belongs to the glycosyltransferase 1 family. Plant sucrose synthase subfamily.</text>
</comment>
<feature type="chain" id="PRO_0000204654" description="Sucrose synthase">
    <location>
        <begin position="1"/>
        <end position="805"/>
    </location>
</feature>
<feature type="region of interest" description="GT-B glycosyltransferase" evidence="1">
    <location>
        <begin position="275"/>
        <end position="752"/>
    </location>
</feature>
<sequence length="805" mass="92333">MATERLTRVHSLKERLDETLTANRNEILALLSRLEAKGKGILQHHQVIAEFEEIPEESRQKLTDGAFGEVLRSTQEAIVLPPWVALAVRPRPGIWEYLRVNVHALVVENLQPAEFLKFKEELVDGSANGNFVLELDFEPFTASFPRPTLNKSIGNGVHFLNRHLSAKLFHDKESLHPLLEFLRLHSYKGKTLMLNDRIQNPDSLQHVLRKAEEYLSTIDPETPYSEFEHRFQEIGLERGWGDTAERVLESIQLLLDLLEAPDPCTLESFLDRIPMVFNVVILSPHGYFAQDDVLGYPDTGGQVVYILDQVRALESEMLSRIKKQGLDIIPRILIITRLLPDAVGTTCGQRLEKVYGTEHCHILRVPFRDEKGIVRKWISRFEVWPYLETYTEDVAHELAKELQSKPDLIVGNYSDGNIVASLLAHKLGVTQCTIAHALEKTKYPESDIYWKKFEEKYHFSCQFTADLFAMNHTDFIITSTFQEIAGSKDKVGQYESHTAFTLPGLYRVVHGIDVFDPKFNIVSPGADQTIYFPYTETSRRLTSFYPEIEELLYSSVENEEHICVLKDRNKPIIFTMARLDRVKNITGLVEWYGKNAKLRELVNLVVVAGDRRKESKDLEEIAEMKKMYGLIETYKLNGQFRWISSQMNRVRNGELYRVICDTKGAFVQPAVYEAFGLTVVEAMATGLPTFATLNGGPAEIIVHGKSGFHIDPYHGDRAADLLVEFFEKVKADPSHWDKISQGGLQRIEEKYTWTIYSQRLLTLTGVYGFWKHVSNLDRLESRRYLEMFYALKYRKLAESVPLAVE</sequence>
<name>SUS_MEDSA</name>
<keyword id="KW-0328">Glycosyltransferase</keyword>
<keyword id="KW-0808">Transferase</keyword>
<protein>
    <recommendedName>
        <fullName>Sucrose synthase</fullName>
        <ecNumber>2.4.1.13</ecNumber>
    </recommendedName>
    <alternativeName>
        <fullName>Sucrose-UDP glucosyltransferase</fullName>
    </alternativeName>
</protein>
<reference key="1">
    <citation type="submission" date="1998-02" db="EMBL/GenBank/DDBJ databases">
        <authorList>
            <person name="Robinson D.L."/>
            <person name="Trepp G."/>
            <person name="Gregerson R.G."/>
            <person name="Twary S.N."/>
            <person name="Roeven R."/>
            <person name="Gantt J.S."/>
            <person name="Vance C.P."/>
        </authorList>
    </citation>
    <scope>NUCLEOTIDE SEQUENCE [MRNA]</scope>
    <source>
        <strain>cv. Saranac</strain>
        <tissue>Root nodule</tissue>
    </source>
</reference>
<proteinExistence type="evidence at transcript level"/>
<evidence type="ECO:0000250" key="1">
    <source>
        <dbReference type="UniProtKB" id="P49040"/>
    </source>
</evidence>
<evidence type="ECO:0000305" key="2"/>
<dbReference type="EC" id="2.4.1.13"/>
<dbReference type="EMBL" id="AF049487">
    <property type="protein sequence ID" value="AAC17867.1"/>
    <property type="molecule type" value="mRNA"/>
</dbReference>
<dbReference type="SMR" id="O65026"/>
<dbReference type="GO" id="GO:0016157">
    <property type="term" value="F:sucrose synthase activity"/>
    <property type="evidence" value="ECO:0007669"/>
    <property type="project" value="UniProtKB-EC"/>
</dbReference>
<dbReference type="GO" id="GO:0005985">
    <property type="term" value="P:sucrose metabolic process"/>
    <property type="evidence" value="ECO:0007669"/>
    <property type="project" value="InterPro"/>
</dbReference>
<dbReference type="FunFam" id="1.20.120.1230:FF:000001">
    <property type="entry name" value="Sucrose synthase"/>
    <property type="match status" value="1"/>
</dbReference>
<dbReference type="FunFam" id="3.10.450.330:FF:000001">
    <property type="entry name" value="Sucrose synthase"/>
    <property type="match status" value="1"/>
</dbReference>
<dbReference type="FunFam" id="3.40.50.2000:FF:000004">
    <property type="entry name" value="Sucrose synthase"/>
    <property type="match status" value="1"/>
</dbReference>
<dbReference type="Gene3D" id="1.20.120.1230">
    <property type="match status" value="1"/>
</dbReference>
<dbReference type="Gene3D" id="3.10.450.330">
    <property type="match status" value="1"/>
</dbReference>
<dbReference type="Gene3D" id="3.40.50.2000">
    <property type="entry name" value="Glycogen Phosphorylase B"/>
    <property type="match status" value="2"/>
</dbReference>
<dbReference type="InterPro" id="IPR001296">
    <property type="entry name" value="Glyco_trans_1"/>
</dbReference>
<dbReference type="InterPro" id="IPR000368">
    <property type="entry name" value="Sucrose_synth_GT-B1"/>
</dbReference>
<dbReference type="InterPro" id="IPR012820">
    <property type="entry name" value="Sucrose_synthase_pln/cyn"/>
</dbReference>
<dbReference type="InterPro" id="IPR056736">
    <property type="entry name" value="SUS_EPBD"/>
</dbReference>
<dbReference type="InterPro" id="IPR056735">
    <property type="entry name" value="SUS_N"/>
</dbReference>
<dbReference type="NCBIfam" id="TIGR02470">
    <property type="entry name" value="sucr_synth"/>
    <property type="match status" value="1"/>
</dbReference>
<dbReference type="PANTHER" id="PTHR45839">
    <property type="match status" value="1"/>
</dbReference>
<dbReference type="PANTHER" id="PTHR45839:SF31">
    <property type="entry name" value="SUCROSE SYNTHASE"/>
    <property type="match status" value="1"/>
</dbReference>
<dbReference type="Pfam" id="PF00534">
    <property type="entry name" value="Glycos_transf_1"/>
    <property type="match status" value="1"/>
</dbReference>
<dbReference type="Pfam" id="PF00862">
    <property type="entry name" value="GT-B_Sucrose_synth"/>
    <property type="match status" value="1"/>
</dbReference>
<dbReference type="Pfam" id="PF24862">
    <property type="entry name" value="SUS_EPBD"/>
    <property type="match status" value="1"/>
</dbReference>
<dbReference type="Pfam" id="PF24861">
    <property type="entry name" value="SUS_N"/>
    <property type="match status" value="1"/>
</dbReference>
<dbReference type="SUPFAM" id="SSF53756">
    <property type="entry name" value="UDP-Glycosyltransferase/glycogen phosphorylase"/>
    <property type="match status" value="1"/>
</dbReference>
<organism>
    <name type="scientific">Medicago sativa</name>
    <name type="common">Alfalfa</name>
    <dbReference type="NCBI Taxonomy" id="3879"/>
    <lineage>
        <taxon>Eukaryota</taxon>
        <taxon>Viridiplantae</taxon>
        <taxon>Streptophyta</taxon>
        <taxon>Embryophyta</taxon>
        <taxon>Tracheophyta</taxon>
        <taxon>Spermatophyta</taxon>
        <taxon>Magnoliopsida</taxon>
        <taxon>eudicotyledons</taxon>
        <taxon>Gunneridae</taxon>
        <taxon>Pentapetalae</taxon>
        <taxon>rosids</taxon>
        <taxon>fabids</taxon>
        <taxon>Fabales</taxon>
        <taxon>Fabaceae</taxon>
        <taxon>Papilionoideae</taxon>
        <taxon>50 kb inversion clade</taxon>
        <taxon>NPAAA clade</taxon>
        <taxon>Hologalegina</taxon>
        <taxon>IRL clade</taxon>
        <taxon>Trifolieae</taxon>
        <taxon>Medicago</taxon>
    </lineage>
</organism>
<accession>O65026</accession>